<keyword id="KW-0027">Amidation</keyword>
<keyword id="KW-0878">Amphibian defense peptide</keyword>
<keyword id="KW-0903">Direct protein sequencing</keyword>
<keyword id="KW-0964">Secreted</keyword>
<feature type="peptide" id="PRO_0000392453" description="Tryptophyllin-14">
    <location>
        <begin position="1"/>
        <end position="6"/>
    </location>
</feature>
<feature type="modified residue" description="Leucine amide" evidence="1">
    <location>
        <position position="6"/>
    </location>
</feature>
<dbReference type="GO" id="GO:0005576">
    <property type="term" value="C:extracellular region"/>
    <property type="evidence" value="ECO:0007669"/>
    <property type="project" value="UniProtKB-SubCell"/>
</dbReference>
<dbReference type="GO" id="GO:0006952">
    <property type="term" value="P:defense response"/>
    <property type="evidence" value="ECO:0007669"/>
    <property type="project" value="UniProtKB-KW"/>
</dbReference>
<comment type="subcellular location">
    <subcellularLocation>
        <location evidence="1">Secreted</location>
    </subcellularLocation>
</comment>
<comment type="tissue specificity">
    <text evidence="1">Expressed by the skin glands.</text>
</comment>
<comment type="mass spectrometry"/>
<comment type="similarity">
    <text evidence="2">Belongs to the frog skin active peptide (FSAP) family. Tryptophillin subfamily.</text>
</comment>
<name>TY14_PITCE</name>
<protein>
    <recommendedName>
        <fullName>Tryptophyllin-14</fullName>
    </recommendedName>
</protein>
<proteinExistence type="evidence at protein level"/>
<organism>
    <name type="scientific">Pithecopus centralis</name>
    <name type="common">Mato Grosso leaf frog</name>
    <name type="synonym">Phyllomedusa centralis</name>
    <dbReference type="NCBI Taxonomy" id="536631"/>
    <lineage>
        <taxon>Eukaryota</taxon>
        <taxon>Metazoa</taxon>
        <taxon>Chordata</taxon>
        <taxon>Craniata</taxon>
        <taxon>Vertebrata</taxon>
        <taxon>Euteleostomi</taxon>
        <taxon>Amphibia</taxon>
        <taxon>Batrachia</taxon>
        <taxon>Anura</taxon>
        <taxon>Neobatrachia</taxon>
        <taxon>Hyloidea</taxon>
        <taxon>Hylidae</taxon>
        <taxon>Phyllomedusinae</taxon>
        <taxon>Pithecopus</taxon>
    </lineage>
</organism>
<evidence type="ECO:0000269" key="1">
    <source ref="1"/>
</evidence>
<evidence type="ECO:0000305" key="2"/>
<reference evidence="2" key="1">
    <citation type="submission" date="2008-06" db="UniProtKB">
        <authorList>
            <person name="Silva L.P."/>
            <person name="Bonatto C.C."/>
            <person name="Bloch C. Jr."/>
        </authorList>
    </citation>
    <scope>PROTEIN SEQUENCE</scope>
    <scope>SUBCELLULAR LOCATION</scope>
    <scope>TISSUE SPECIFICITY</scope>
    <scope>MASS SPECTROMETRY</scope>
    <scope>AMIDATION AT LEU-6</scope>
    <source>
        <tissue>Skin secretion</tissue>
    </source>
</reference>
<accession>P85877</accession>
<sequence>FPPWVL</sequence>